<accession>Q7MF44</accession>
<proteinExistence type="inferred from homology"/>
<sequence length="367" mass="40354">MKNEYLLLTPGPLSTSETVREAMLKDWCTWDDEYNKDIVEVIRTKLVKLATKHSGYTSVLMQGSGTASVEATIGSAIGKEGKLLVVDNGAYGARIAQIAAYLNIPCHVVSPGETSQPHLNEVETALASDPAITHVAIVHCETTTGMLNPIEAFASVAKAHGKVVILDAMSSFGGIPIDIAELGIDFMISSANKCIQGVPGFGFVIAKQTELEKCQGQARSLSLDLYDQWHCMEVNHGKWRFTSPTHTVRAFYQALLELEQEGGIEARHNRYQTNQKTLVAGMRSLGFEPLLSDDLHSPIITSFYSPTHSDYQFKAFYTRLKEQGFVIYPGKVSNADCFRIGNIGEVYPADIERLIGAIEKAMYWQVA</sequence>
<protein>
    <recommendedName>
        <fullName evidence="1">2-aminoethylphosphonate--pyruvate transaminase</fullName>
        <ecNumber evidence="1">2.6.1.37</ecNumber>
    </recommendedName>
    <alternativeName>
        <fullName evidence="1">2-aminoethylphosphonate aminotransferase</fullName>
    </alternativeName>
    <alternativeName>
        <fullName evidence="1">AEP transaminase</fullName>
        <shortName evidence="1">AEPT</shortName>
    </alternativeName>
</protein>
<dbReference type="EC" id="2.6.1.37" evidence="1"/>
<dbReference type="EMBL" id="BA000038">
    <property type="protein sequence ID" value="BAC96502.1"/>
    <property type="status" value="ALT_INIT"/>
    <property type="molecule type" value="Genomic_DNA"/>
</dbReference>
<dbReference type="RefSeq" id="WP_043877480.1">
    <property type="nucleotide sequence ID" value="NC_005140.1"/>
</dbReference>
<dbReference type="SMR" id="Q7MF44"/>
<dbReference type="STRING" id="672.VV93_v1c34570"/>
<dbReference type="KEGG" id="vvy:VVA0476"/>
<dbReference type="PATRIC" id="fig|196600.6.peg.3679"/>
<dbReference type="eggNOG" id="COG0075">
    <property type="taxonomic scope" value="Bacteria"/>
</dbReference>
<dbReference type="HOGENOM" id="CLU_027686_3_1_6"/>
<dbReference type="Proteomes" id="UP000002675">
    <property type="component" value="Chromosome II"/>
</dbReference>
<dbReference type="GO" id="GO:0047304">
    <property type="term" value="F:2-aminoethylphosphonate-pyruvate transaminase activity"/>
    <property type="evidence" value="ECO:0007669"/>
    <property type="project" value="UniProtKB-UniRule"/>
</dbReference>
<dbReference type="GO" id="GO:0019700">
    <property type="term" value="P:organic phosphonate catabolic process"/>
    <property type="evidence" value="ECO:0007669"/>
    <property type="project" value="InterPro"/>
</dbReference>
<dbReference type="FunFam" id="3.40.640.10:FF:000183">
    <property type="entry name" value="2-aminoethylphosphonate--pyruvate transaminase"/>
    <property type="match status" value="1"/>
</dbReference>
<dbReference type="Gene3D" id="3.90.1150.10">
    <property type="entry name" value="Aspartate Aminotransferase, domain 1"/>
    <property type="match status" value="1"/>
</dbReference>
<dbReference type="Gene3D" id="3.40.640.10">
    <property type="entry name" value="Type I PLP-dependent aspartate aminotransferase-like (Major domain)"/>
    <property type="match status" value="1"/>
</dbReference>
<dbReference type="HAMAP" id="MF_01376">
    <property type="entry name" value="PhnW_aminotrans_5"/>
    <property type="match status" value="1"/>
</dbReference>
<dbReference type="InterPro" id="IPR000192">
    <property type="entry name" value="Aminotrans_V_dom"/>
</dbReference>
<dbReference type="InterPro" id="IPR012703">
    <property type="entry name" value="NH2EtPonate_pyrv_transaminase"/>
</dbReference>
<dbReference type="InterPro" id="IPR015424">
    <property type="entry name" value="PyrdxlP-dep_Trfase"/>
</dbReference>
<dbReference type="InterPro" id="IPR015421">
    <property type="entry name" value="PyrdxlP-dep_Trfase_major"/>
</dbReference>
<dbReference type="InterPro" id="IPR015422">
    <property type="entry name" value="PyrdxlP-dep_Trfase_small"/>
</dbReference>
<dbReference type="InterPro" id="IPR024169">
    <property type="entry name" value="SP_NH2Trfase/AEP_transaminase"/>
</dbReference>
<dbReference type="NCBIfam" id="TIGR03301">
    <property type="entry name" value="PhnW-AepZ"/>
    <property type="match status" value="1"/>
</dbReference>
<dbReference type="NCBIfam" id="NF010006">
    <property type="entry name" value="PRK13479.1"/>
    <property type="match status" value="1"/>
</dbReference>
<dbReference type="NCBIfam" id="TIGR02326">
    <property type="entry name" value="transamin_PhnW"/>
    <property type="match status" value="1"/>
</dbReference>
<dbReference type="PANTHER" id="PTHR42778">
    <property type="entry name" value="2-AMINOETHYLPHOSPHONATE--PYRUVATE TRANSAMINASE"/>
    <property type="match status" value="1"/>
</dbReference>
<dbReference type="PANTHER" id="PTHR42778:SF1">
    <property type="entry name" value="2-AMINOETHYLPHOSPHONATE--PYRUVATE TRANSAMINASE"/>
    <property type="match status" value="1"/>
</dbReference>
<dbReference type="Pfam" id="PF00266">
    <property type="entry name" value="Aminotran_5"/>
    <property type="match status" value="1"/>
</dbReference>
<dbReference type="PIRSF" id="PIRSF000524">
    <property type="entry name" value="SPT"/>
    <property type="match status" value="1"/>
</dbReference>
<dbReference type="SUPFAM" id="SSF53383">
    <property type="entry name" value="PLP-dependent transferases"/>
    <property type="match status" value="1"/>
</dbReference>
<keyword id="KW-0032">Aminotransferase</keyword>
<keyword id="KW-0663">Pyridoxal phosphate</keyword>
<keyword id="KW-0670">Pyruvate</keyword>
<keyword id="KW-0808">Transferase</keyword>
<reference key="1">
    <citation type="journal article" date="2003" name="Genome Res.">
        <title>Comparative genome analysis of Vibrio vulnificus, a marine pathogen.</title>
        <authorList>
            <person name="Chen C.-Y."/>
            <person name="Wu K.-M."/>
            <person name="Chang Y.-C."/>
            <person name="Chang C.-H."/>
            <person name="Tsai H.-C."/>
            <person name="Liao T.-L."/>
            <person name="Liu Y.-M."/>
            <person name="Chen H.-J."/>
            <person name="Shen A.B.-T."/>
            <person name="Li J.-C."/>
            <person name="Su T.-L."/>
            <person name="Shao C.-P."/>
            <person name="Lee C.-T."/>
            <person name="Hor L.-I."/>
            <person name="Tsai S.-F."/>
        </authorList>
    </citation>
    <scope>NUCLEOTIDE SEQUENCE [LARGE SCALE GENOMIC DNA]</scope>
    <source>
        <strain>YJ016</strain>
    </source>
</reference>
<gene>
    <name evidence="1" type="primary">phnW</name>
    <name type="ordered locus">VVA0476</name>
</gene>
<comment type="function">
    <text evidence="1">Involved in phosphonate degradation.</text>
</comment>
<comment type="catalytic activity">
    <reaction evidence="1">
        <text>(2-aminoethyl)phosphonate + pyruvate = phosphonoacetaldehyde + L-alanine</text>
        <dbReference type="Rhea" id="RHEA:17021"/>
        <dbReference type="ChEBI" id="CHEBI:15361"/>
        <dbReference type="ChEBI" id="CHEBI:57418"/>
        <dbReference type="ChEBI" id="CHEBI:57972"/>
        <dbReference type="ChEBI" id="CHEBI:58383"/>
        <dbReference type="EC" id="2.6.1.37"/>
    </reaction>
</comment>
<comment type="cofactor">
    <cofactor evidence="1">
        <name>pyridoxal 5'-phosphate</name>
        <dbReference type="ChEBI" id="CHEBI:597326"/>
    </cofactor>
</comment>
<comment type="subunit">
    <text evidence="1">Homodimer.</text>
</comment>
<comment type="similarity">
    <text evidence="1">Belongs to the class-V pyridoxal-phosphate-dependent aminotransferase family. PhnW subfamily.</text>
</comment>
<comment type="sequence caution" evidence="2">
    <conflict type="erroneous initiation">
        <sequence resource="EMBL-CDS" id="BAC96502"/>
    </conflict>
</comment>
<name>PHNW_VIBVY</name>
<feature type="chain" id="PRO_0000286792" description="2-aminoethylphosphonate--pyruvate transaminase">
    <location>
        <begin position="1"/>
        <end position="367"/>
    </location>
</feature>
<feature type="modified residue" description="N6-(pyridoxal phosphate)lysine" evidence="1">
    <location>
        <position position="193"/>
    </location>
</feature>
<organism>
    <name type="scientific">Vibrio vulnificus (strain YJ016)</name>
    <dbReference type="NCBI Taxonomy" id="196600"/>
    <lineage>
        <taxon>Bacteria</taxon>
        <taxon>Pseudomonadati</taxon>
        <taxon>Pseudomonadota</taxon>
        <taxon>Gammaproteobacteria</taxon>
        <taxon>Vibrionales</taxon>
        <taxon>Vibrionaceae</taxon>
        <taxon>Vibrio</taxon>
    </lineage>
</organism>
<evidence type="ECO:0000255" key="1">
    <source>
        <dbReference type="HAMAP-Rule" id="MF_01376"/>
    </source>
</evidence>
<evidence type="ECO:0000305" key="2"/>